<accession>Q6MRX8</accession>
<protein>
    <recommendedName>
        <fullName evidence="1">Large ribosomal subunit protein uL10</fullName>
    </recommendedName>
    <alternativeName>
        <fullName evidence="2">50S ribosomal protein L10</fullName>
    </alternativeName>
</protein>
<gene>
    <name evidence="1" type="primary">rplJ</name>
    <name type="ordered locus">MSC_1006</name>
</gene>
<feature type="chain" id="PRO_0000154669" description="Large ribosomal subunit protein uL10">
    <location>
        <begin position="1"/>
        <end position="165"/>
    </location>
</feature>
<name>RL10_MYCMS</name>
<dbReference type="EMBL" id="BX293980">
    <property type="protein sequence ID" value="CAE77613.1"/>
    <property type="molecule type" value="Genomic_DNA"/>
</dbReference>
<dbReference type="RefSeq" id="NP_975971.1">
    <property type="nucleotide sequence ID" value="NC_005364.2"/>
</dbReference>
<dbReference type="RefSeq" id="WP_011167150.1">
    <property type="nucleotide sequence ID" value="NC_005364.2"/>
</dbReference>
<dbReference type="SMR" id="Q6MRX8"/>
<dbReference type="STRING" id="272632.MSC_1006"/>
<dbReference type="KEGG" id="mmy:MSC_1006"/>
<dbReference type="PATRIC" id="fig|272632.4.peg.1092"/>
<dbReference type="eggNOG" id="COG0244">
    <property type="taxonomic scope" value="Bacteria"/>
</dbReference>
<dbReference type="HOGENOM" id="CLU_092227_2_0_14"/>
<dbReference type="Proteomes" id="UP000001016">
    <property type="component" value="Chromosome"/>
</dbReference>
<dbReference type="GO" id="GO:1990904">
    <property type="term" value="C:ribonucleoprotein complex"/>
    <property type="evidence" value="ECO:0007669"/>
    <property type="project" value="UniProtKB-KW"/>
</dbReference>
<dbReference type="GO" id="GO:0005840">
    <property type="term" value="C:ribosome"/>
    <property type="evidence" value="ECO:0007669"/>
    <property type="project" value="UniProtKB-KW"/>
</dbReference>
<dbReference type="GO" id="GO:0070180">
    <property type="term" value="F:large ribosomal subunit rRNA binding"/>
    <property type="evidence" value="ECO:0007669"/>
    <property type="project" value="UniProtKB-UniRule"/>
</dbReference>
<dbReference type="GO" id="GO:0006412">
    <property type="term" value="P:translation"/>
    <property type="evidence" value="ECO:0007669"/>
    <property type="project" value="UniProtKB-UniRule"/>
</dbReference>
<dbReference type="CDD" id="cd05797">
    <property type="entry name" value="Ribosomal_L10"/>
    <property type="match status" value="1"/>
</dbReference>
<dbReference type="Gene3D" id="3.30.70.1730">
    <property type="match status" value="1"/>
</dbReference>
<dbReference type="HAMAP" id="MF_00362">
    <property type="entry name" value="Ribosomal_uL10"/>
    <property type="match status" value="1"/>
</dbReference>
<dbReference type="InterPro" id="IPR001790">
    <property type="entry name" value="Ribosomal_uL10"/>
</dbReference>
<dbReference type="InterPro" id="IPR043141">
    <property type="entry name" value="Ribosomal_uL10-like_sf"/>
</dbReference>
<dbReference type="InterPro" id="IPR022973">
    <property type="entry name" value="Ribosomal_uL10_bac"/>
</dbReference>
<dbReference type="InterPro" id="IPR047865">
    <property type="entry name" value="Ribosomal_uL10_bac_type"/>
</dbReference>
<dbReference type="NCBIfam" id="NF000955">
    <property type="entry name" value="PRK00099.1-1"/>
    <property type="match status" value="1"/>
</dbReference>
<dbReference type="PANTHER" id="PTHR11560">
    <property type="entry name" value="39S RIBOSOMAL PROTEIN L10, MITOCHONDRIAL"/>
    <property type="match status" value="1"/>
</dbReference>
<dbReference type="Pfam" id="PF00466">
    <property type="entry name" value="Ribosomal_L10"/>
    <property type="match status" value="1"/>
</dbReference>
<dbReference type="SUPFAM" id="SSF160369">
    <property type="entry name" value="Ribosomal protein L10-like"/>
    <property type="match status" value="1"/>
</dbReference>
<comment type="function">
    <text evidence="1">Forms part of the ribosomal stalk, playing a central role in the interaction of the ribosome with GTP-bound translation factors.</text>
</comment>
<comment type="subunit">
    <text evidence="1">Part of the ribosomal stalk of the 50S ribosomal subunit. The N-terminus interacts with L11 and the large rRNA to form the base of the stalk. The C-terminus forms an elongated spine to which L12 dimers bind in a sequential fashion forming a multimeric L10(L12)X complex.</text>
</comment>
<comment type="similarity">
    <text evidence="1">Belongs to the universal ribosomal protein uL10 family.</text>
</comment>
<evidence type="ECO:0000255" key="1">
    <source>
        <dbReference type="HAMAP-Rule" id="MF_00362"/>
    </source>
</evidence>
<evidence type="ECO:0000305" key="2"/>
<reference key="1">
    <citation type="journal article" date="2004" name="Genome Res.">
        <title>The genome sequence of Mycoplasma mycoides subsp. mycoides SC type strain PG1T, the causative agent of contagious bovine pleuropneumonia (CBPP).</title>
        <authorList>
            <person name="Westberg J."/>
            <person name="Persson A."/>
            <person name="Holmberg A."/>
            <person name="Goesmann A."/>
            <person name="Lundeberg J."/>
            <person name="Johansson K.-E."/>
            <person name="Pettersson B."/>
            <person name="Uhlen M."/>
        </authorList>
    </citation>
    <scope>NUCLEOTIDE SEQUENCE [LARGE SCALE GENOMIC DNA]</scope>
    <source>
        <strain>CCUG 32753 / NCTC 10114 / PG1</strain>
    </source>
</reference>
<organism>
    <name type="scientific">Mycoplasma mycoides subsp. mycoides SC (strain CCUG 32753 / NCTC 10114 / PG1)</name>
    <dbReference type="NCBI Taxonomy" id="272632"/>
    <lineage>
        <taxon>Bacteria</taxon>
        <taxon>Bacillati</taxon>
        <taxon>Mycoplasmatota</taxon>
        <taxon>Mollicutes</taxon>
        <taxon>Mycoplasmataceae</taxon>
        <taxon>Mycoplasma</taxon>
    </lineage>
</organism>
<keyword id="KW-1185">Reference proteome</keyword>
<keyword id="KW-0687">Ribonucleoprotein</keyword>
<keyword id="KW-0689">Ribosomal protein</keyword>
<keyword id="KW-0694">RNA-binding</keyword>
<keyword id="KW-0699">rRNA-binding</keyword>
<proteinExistence type="inferred from homology"/>
<sequence>MSNSRPAHARKAEIVVEIVSKIKSAQGVAIAEYKHLTVAKMTELRVQALKQNIDIKVYKDSLVRRAAEELGLVDLIPFLTQQNVFIFSNEDSISAAKLVANFAKKNEALKLKAGIYEGKVVDTVGINEVASLPSKEELYSMFASSLLYPLRKAMAAINAVAETRN</sequence>